<reference key="1">
    <citation type="journal article" date="2005" name="Science">
        <title>The genome of the basidiomycetous yeast and human pathogen Cryptococcus neoformans.</title>
        <authorList>
            <person name="Loftus B.J."/>
            <person name="Fung E."/>
            <person name="Roncaglia P."/>
            <person name="Rowley D."/>
            <person name="Amedeo P."/>
            <person name="Bruno D."/>
            <person name="Vamathevan J."/>
            <person name="Miranda M."/>
            <person name="Anderson I.J."/>
            <person name="Fraser J.A."/>
            <person name="Allen J.E."/>
            <person name="Bosdet I.E."/>
            <person name="Brent M.R."/>
            <person name="Chiu R."/>
            <person name="Doering T.L."/>
            <person name="Donlin M.J."/>
            <person name="D'Souza C.A."/>
            <person name="Fox D.S."/>
            <person name="Grinberg V."/>
            <person name="Fu J."/>
            <person name="Fukushima M."/>
            <person name="Haas B.J."/>
            <person name="Huang J.C."/>
            <person name="Janbon G."/>
            <person name="Jones S.J.M."/>
            <person name="Koo H.L."/>
            <person name="Krzywinski M.I."/>
            <person name="Kwon-Chung K.J."/>
            <person name="Lengeler K.B."/>
            <person name="Maiti R."/>
            <person name="Marra M.A."/>
            <person name="Marra R.E."/>
            <person name="Mathewson C.A."/>
            <person name="Mitchell T.G."/>
            <person name="Pertea M."/>
            <person name="Riggs F.R."/>
            <person name="Salzberg S.L."/>
            <person name="Schein J.E."/>
            <person name="Shvartsbeyn A."/>
            <person name="Shin H."/>
            <person name="Shumway M."/>
            <person name="Specht C.A."/>
            <person name="Suh B.B."/>
            <person name="Tenney A."/>
            <person name="Utterback T.R."/>
            <person name="Wickes B.L."/>
            <person name="Wortman J.R."/>
            <person name="Wye N.H."/>
            <person name="Kronstad J.W."/>
            <person name="Lodge J.K."/>
            <person name="Heitman J."/>
            <person name="Davis R.W."/>
            <person name="Fraser C.M."/>
            <person name="Hyman R.W."/>
        </authorList>
    </citation>
    <scope>NUCLEOTIDE SEQUENCE [LARGE SCALE GENOMIC DNA]</scope>
    <source>
        <strain>B-3501A</strain>
    </source>
</reference>
<organism>
    <name type="scientific">Cryptococcus neoformans var. neoformans serotype D (strain B-3501A)</name>
    <name type="common">Filobasidiella neoformans</name>
    <dbReference type="NCBI Taxonomy" id="283643"/>
    <lineage>
        <taxon>Eukaryota</taxon>
        <taxon>Fungi</taxon>
        <taxon>Dikarya</taxon>
        <taxon>Basidiomycota</taxon>
        <taxon>Agaricomycotina</taxon>
        <taxon>Tremellomycetes</taxon>
        <taxon>Tremellales</taxon>
        <taxon>Cryptococcaceae</taxon>
        <taxon>Cryptococcus</taxon>
        <taxon>Cryptococcus neoformans species complex</taxon>
    </lineage>
</organism>
<dbReference type="EMBL" id="AAEY01000032">
    <property type="protein sequence ID" value="EAL19982.1"/>
    <property type="molecule type" value="Genomic_DNA"/>
</dbReference>
<dbReference type="RefSeq" id="XP_774629.1">
    <property type="nucleotide sequence ID" value="XM_769536.1"/>
</dbReference>
<dbReference type="SMR" id="P0CS03"/>
<dbReference type="GlyCosmos" id="P0CS03">
    <property type="glycosylation" value="1 site, No reported glycans"/>
</dbReference>
<dbReference type="EnsemblFungi" id="AAW44189">
    <property type="protein sequence ID" value="AAW44189"/>
    <property type="gene ID" value="CNF01620"/>
</dbReference>
<dbReference type="GeneID" id="4936861"/>
<dbReference type="KEGG" id="cnb:CNBF3090"/>
<dbReference type="VEuPathDB" id="FungiDB:CNBF3090"/>
<dbReference type="HOGENOM" id="CLU_025360_1_2_1"/>
<dbReference type="OrthoDB" id="6466at5206"/>
<dbReference type="GO" id="GO:0030659">
    <property type="term" value="C:cytoplasmic vesicle membrane"/>
    <property type="evidence" value="ECO:0007669"/>
    <property type="project" value="UniProtKB-SubCell"/>
</dbReference>
<dbReference type="GO" id="GO:0005789">
    <property type="term" value="C:endoplasmic reticulum membrane"/>
    <property type="evidence" value="ECO:0007669"/>
    <property type="project" value="UniProtKB-SubCell"/>
</dbReference>
<dbReference type="GO" id="GO:0000139">
    <property type="term" value="C:Golgi membrane"/>
    <property type="evidence" value="ECO:0007669"/>
    <property type="project" value="UniProtKB-SubCell"/>
</dbReference>
<dbReference type="InterPro" id="IPR050186">
    <property type="entry name" value="TPT_transporter"/>
</dbReference>
<dbReference type="NCBIfam" id="TIGR00803">
    <property type="entry name" value="nst"/>
    <property type="match status" value="1"/>
</dbReference>
<dbReference type="PANTHER" id="PTHR11132">
    <property type="entry name" value="SOLUTE CARRIER FAMILY 35"/>
    <property type="match status" value="1"/>
</dbReference>
<comment type="function">
    <text>Involved in the import of GDP-mannose from the cytoplasm into the Golgi lumen. Involved in capsule synthesis.</text>
</comment>
<comment type="subunit">
    <text evidence="1">Homooligomer.</text>
</comment>
<comment type="subcellular location">
    <subcellularLocation>
        <location evidence="1">Golgi apparatus membrane</location>
        <topology evidence="1">Multi-pass membrane protein</topology>
    </subcellularLocation>
    <subcellularLocation>
        <location evidence="1">Cytoplasmic vesicle membrane</location>
        <topology evidence="1">Multi-pass membrane protein</topology>
    </subcellularLocation>
    <subcellularLocation>
        <location evidence="1">Endoplasmic reticulum membrane</location>
        <topology evidence="1">Multi-pass membrane protein</topology>
    </subcellularLocation>
</comment>
<comment type="similarity">
    <text evidence="4">Belongs to the TPT transporter family. SLC35D subfamily.</text>
</comment>
<feature type="chain" id="PRO_0000410313" description="GDP-mannose transporter 1">
    <location>
        <begin position="1"/>
        <end position="397"/>
    </location>
</feature>
<feature type="topological domain" description="Cytoplasmic" evidence="1">
    <location>
        <begin position="1"/>
        <end position="61"/>
    </location>
</feature>
<feature type="transmembrane region" description="Helical" evidence="2">
    <location>
        <begin position="62"/>
        <end position="82"/>
    </location>
</feature>
<feature type="topological domain" description="Lumenal" evidence="1">
    <location>
        <begin position="83"/>
        <end position="87"/>
    </location>
</feature>
<feature type="transmembrane region" description="Helical" evidence="2">
    <location>
        <begin position="88"/>
        <end position="108"/>
    </location>
</feature>
<feature type="topological domain" description="Cytoplasmic" evidence="1">
    <location>
        <begin position="109"/>
        <end position="124"/>
    </location>
</feature>
<feature type="transmembrane region" description="Helical" evidence="2">
    <location>
        <begin position="125"/>
        <end position="142"/>
    </location>
</feature>
<feature type="topological domain" description="Lumenal" evidence="1">
    <location>
        <begin position="143"/>
        <end position="145"/>
    </location>
</feature>
<feature type="transmembrane region" description="Helical" evidence="2">
    <location>
        <begin position="146"/>
        <end position="168"/>
    </location>
</feature>
<feature type="topological domain" description="Cytoplasmic" evidence="1">
    <location>
        <begin position="169"/>
        <end position="174"/>
    </location>
</feature>
<feature type="transmembrane region" description="Helical" evidence="2">
    <location>
        <begin position="175"/>
        <end position="197"/>
    </location>
</feature>
<feature type="topological domain" description="Lumenal" evidence="1">
    <location>
        <begin position="198"/>
        <end position="228"/>
    </location>
</feature>
<feature type="transmembrane region" description="Helical" evidence="2">
    <location>
        <begin position="229"/>
        <end position="249"/>
    </location>
</feature>
<feature type="topological domain" description="Cytoplasmic" evidence="1">
    <location>
        <begin position="250"/>
        <end position="272"/>
    </location>
</feature>
<feature type="transmembrane region" description="Helical" evidence="2">
    <location>
        <begin position="273"/>
        <end position="293"/>
    </location>
</feature>
<feature type="topological domain" description="Lumenal" evidence="1">
    <location>
        <begin position="294"/>
        <end position="300"/>
    </location>
</feature>
<feature type="transmembrane region" description="Helical" evidence="2">
    <location>
        <begin position="301"/>
        <end position="321"/>
    </location>
</feature>
<feature type="topological domain" description="Cytoplasmic" evidence="1">
    <location>
        <begin position="322"/>
        <end position="332"/>
    </location>
</feature>
<feature type="transmembrane region" description="Helical" evidence="2">
    <location>
        <begin position="333"/>
        <end position="353"/>
    </location>
</feature>
<feature type="topological domain" description="Lumenal" evidence="1">
    <location>
        <begin position="354"/>
        <end position="355"/>
    </location>
</feature>
<feature type="transmembrane region" description="Helical" evidence="2">
    <location>
        <begin position="356"/>
        <end position="376"/>
    </location>
</feature>
<feature type="topological domain" description="Cytoplasmic" evidence="1">
    <location>
        <begin position="377"/>
        <end position="397"/>
    </location>
</feature>
<feature type="region of interest" description="Disordered" evidence="3">
    <location>
        <begin position="1"/>
        <end position="57"/>
    </location>
</feature>
<feature type="compositionally biased region" description="Polar residues" evidence="3">
    <location>
        <begin position="9"/>
        <end position="19"/>
    </location>
</feature>
<feature type="compositionally biased region" description="Basic and acidic residues" evidence="3">
    <location>
        <begin position="34"/>
        <end position="54"/>
    </location>
</feature>
<feature type="glycosylation site" description="N-linked (GlcNAc...) asparagine" evidence="2">
    <location>
        <position position="87"/>
    </location>
</feature>
<sequence>MSKPFVPTPNISRPATPSSLDYGKDEASSTLLRDMGERGDRERKDREERDKKEAMPSGQDQVLPILSYCAASIMMTVVNKYVVSGANFTMTFLLLAIQSSVCVLAVTTVKKLGFISFRDFDKNDAKAWWPISTLLVAVIYTGSKALQFLSIPVYTIFKNLTIILIAYGEVFMFNGAVSGLTLCSFALMVGSSIIAAWSDITSVWNKEPELDPITGLEITVGPVSTIGGLNAGYIWMALNCFVSAAYVLFMRKRIKVTGFKDWDSMYYNNLLSIPILVVFSLVIEDWGSESLALNFPASNRVLLLSAMAFSGAAAVFISYSTAWCVRITGSTTYSMVGALNKLPVAASGILFFGDPANFGNISAIAVGGVAGVVYAVAKTNQAKVEKARQARAAGGRP</sequence>
<name>GMT1_CRYNB</name>
<evidence type="ECO:0000250" key="1"/>
<evidence type="ECO:0000255" key="2"/>
<evidence type="ECO:0000256" key="3">
    <source>
        <dbReference type="SAM" id="MobiDB-lite"/>
    </source>
</evidence>
<evidence type="ECO:0000305" key="4"/>
<protein>
    <recommendedName>
        <fullName>GDP-mannose transporter 1</fullName>
        <shortName>GMT 1</shortName>
    </recommendedName>
</protein>
<gene>
    <name type="primary">GMT1</name>
    <name type="synonym">VRG4-1</name>
    <name type="ordered locus">CNBF3090</name>
</gene>
<keyword id="KW-0968">Cytoplasmic vesicle</keyword>
<keyword id="KW-0256">Endoplasmic reticulum</keyword>
<keyword id="KW-0325">Glycoprotein</keyword>
<keyword id="KW-0333">Golgi apparatus</keyword>
<keyword id="KW-0472">Membrane</keyword>
<keyword id="KW-0762">Sugar transport</keyword>
<keyword id="KW-0812">Transmembrane</keyword>
<keyword id="KW-1133">Transmembrane helix</keyword>
<keyword id="KW-0813">Transport</keyword>
<proteinExistence type="inferred from homology"/>
<accession>P0CS03</accession>
<accession>Q4JL68</accession>
<accession>Q55QM9</accession>
<accession>Q5KFI6</accession>